<comment type="function">
    <text>May be a globin and may play a role in oxygen transport.</text>
</comment>
<comment type="subcellular location">
    <subcellularLocation>
        <location>Secreted</location>
        <location>Extracellular space</location>
    </subcellularLocation>
</comment>
<comment type="similarity">
    <text evidence="2">Belongs to the globin family.</text>
</comment>
<feature type="signal peptide" evidence="3">
    <location>
        <begin position="1"/>
        <end position="15"/>
    </location>
</feature>
<feature type="chain" id="PRO_0000011187" description="Globin-like host-protective antigen">
    <location>
        <begin position="16"/>
        <end position="173"/>
    </location>
</feature>
<feature type="domain" description="Globin" evidence="2">
    <location>
        <begin position="25"/>
        <end position="166"/>
    </location>
</feature>
<feature type="binding site" description="axial binding residue" evidence="1">
    <location>
        <position position="114"/>
    </location>
    <ligand>
        <name>heme b</name>
        <dbReference type="ChEBI" id="CHEBI:60344"/>
    </ligand>
    <ligandPart>
        <name>Fe</name>
        <dbReference type="ChEBI" id="CHEBI:18248"/>
    </ligandPart>
</feature>
<feature type="sequence variant" description="In clone ADES3/2.">
    <original>E</original>
    <variation>D</variation>
    <location>
        <position position="126"/>
    </location>
</feature>
<feature type="sequence variant" description="In clone ADES3/2.">
    <original>S</original>
    <variation>G</variation>
    <location>
        <position position="129"/>
    </location>
</feature>
<dbReference type="EMBL" id="M63263">
    <property type="protein sequence ID" value="AAA30102.1"/>
    <property type="molecule type" value="mRNA"/>
</dbReference>
<dbReference type="PIR" id="A45646">
    <property type="entry name" value="A45646"/>
</dbReference>
<dbReference type="SMR" id="P27613"/>
<dbReference type="GO" id="GO:0005576">
    <property type="term" value="C:extracellular region"/>
    <property type="evidence" value="ECO:0007669"/>
    <property type="project" value="UniProtKB-SubCell"/>
</dbReference>
<dbReference type="GO" id="GO:0020037">
    <property type="term" value="F:heme binding"/>
    <property type="evidence" value="ECO:0007669"/>
    <property type="project" value="InterPro"/>
</dbReference>
<dbReference type="GO" id="GO:0005506">
    <property type="term" value="F:iron ion binding"/>
    <property type="evidence" value="ECO:0007669"/>
    <property type="project" value="InterPro"/>
</dbReference>
<dbReference type="GO" id="GO:0019825">
    <property type="term" value="F:oxygen binding"/>
    <property type="evidence" value="ECO:0007669"/>
    <property type="project" value="InterPro"/>
</dbReference>
<dbReference type="GO" id="GO:0005344">
    <property type="term" value="F:oxygen carrier activity"/>
    <property type="evidence" value="ECO:0007669"/>
    <property type="project" value="UniProtKB-KW"/>
</dbReference>
<dbReference type="CDD" id="cd01040">
    <property type="entry name" value="Mb-like"/>
    <property type="match status" value="1"/>
</dbReference>
<dbReference type="Gene3D" id="1.10.490.10">
    <property type="entry name" value="Globins"/>
    <property type="match status" value="1"/>
</dbReference>
<dbReference type="InterPro" id="IPR000971">
    <property type="entry name" value="Globin"/>
</dbReference>
<dbReference type="InterPro" id="IPR009050">
    <property type="entry name" value="Globin-like_sf"/>
</dbReference>
<dbReference type="InterPro" id="IPR012292">
    <property type="entry name" value="Globin/Proto"/>
</dbReference>
<dbReference type="InterPro" id="IPR012085">
    <property type="entry name" value="Globin_nematode"/>
</dbReference>
<dbReference type="InterPro" id="IPR044399">
    <property type="entry name" value="Mb-like_M"/>
</dbReference>
<dbReference type="Pfam" id="PF00042">
    <property type="entry name" value="Globin"/>
    <property type="match status" value="1"/>
</dbReference>
<dbReference type="PIRSF" id="PIRSF002026">
    <property type="entry name" value="Nematode_globin"/>
    <property type="match status" value="1"/>
</dbReference>
<dbReference type="SUPFAM" id="SSF46458">
    <property type="entry name" value="Globin-like"/>
    <property type="match status" value="1"/>
</dbReference>
<dbReference type="PROSITE" id="PS01033">
    <property type="entry name" value="GLOBIN"/>
    <property type="match status" value="1"/>
</dbReference>
<sequence>MRFLLLAAFVAYAYAKSDEEIRKDALSALDVVPLGSTPEKLENGREFYKYFFTNHQDLRKYFKGAETFTADDIAKSDRFKKLGNQLLLSVHLAADTYDNEMIFRAFVRDTIDRHVDRGLDPKLWKEFWSIYQKFLESKGKTLSADQKAAFDAIGTRFNDEAQKQLAHHGLPHT</sequence>
<keyword id="KW-0903">Direct protein sequencing</keyword>
<keyword id="KW-0349">Heme</keyword>
<keyword id="KW-0408">Iron</keyword>
<keyword id="KW-0479">Metal-binding</keyword>
<keyword id="KW-0561">Oxygen transport</keyword>
<keyword id="KW-0964">Secreted</keyword>
<keyword id="KW-0732">Signal</keyword>
<keyword id="KW-0813">Transport</keyword>
<name>GLBH_TRICO</name>
<protein>
    <recommendedName>
        <fullName>Globin-like host-protective antigen</fullName>
    </recommendedName>
</protein>
<organism>
    <name type="scientific">Trichostrongylus colubriformis</name>
    <name type="common">Black scour worm</name>
    <dbReference type="NCBI Taxonomy" id="6319"/>
    <lineage>
        <taxon>Eukaryota</taxon>
        <taxon>Metazoa</taxon>
        <taxon>Ecdysozoa</taxon>
        <taxon>Nematoda</taxon>
        <taxon>Chromadorea</taxon>
        <taxon>Rhabditida</taxon>
        <taxon>Rhabditina</taxon>
        <taxon>Rhabditomorpha</taxon>
        <taxon>Strongyloidea</taxon>
        <taxon>Trichostrongylidae</taxon>
        <taxon>Trichostrongylus</taxon>
    </lineage>
</organism>
<accession>P27613</accession>
<proteinExistence type="evidence at protein level"/>
<reference key="1">
    <citation type="journal article" date="1992" name="Mol. Biochem. Parasitol.">
        <title>The isolation, characterization and cloning of a globin-like, host-protective antigen from the excretory-secretory products of Trichostrongylus colubriformis.</title>
        <authorList>
            <person name="Frenkel M.J."/>
            <person name="Dopheide T.A.A."/>
            <person name="Wagland B.M."/>
            <person name="Ward C.W."/>
        </authorList>
    </citation>
    <scope>NUCLEOTIDE SEQUENCE [MRNA]</scope>
    <scope>PROTEIN SEQUENCE OF 16-37 AND 163-173</scope>
    <source>
        <strain>McMaster</strain>
    </source>
</reference>
<evidence type="ECO:0000250" key="1"/>
<evidence type="ECO:0000255" key="2">
    <source>
        <dbReference type="PROSITE-ProRule" id="PRU00238"/>
    </source>
</evidence>
<evidence type="ECO:0000269" key="3">
    <source>
    </source>
</evidence>